<name>PYRF_CLOBM</name>
<keyword id="KW-0210">Decarboxylase</keyword>
<keyword id="KW-0456">Lyase</keyword>
<keyword id="KW-0665">Pyrimidine biosynthesis</keyword>
<proteinExistence type="inferred from homology"/>
<dbReference type="EC" id="4.1.1.23" evidence="1"/>
<dbReference type="EMBL" id="CP000962">
    <property type="protein sequence ID" value="ACA55986.1"/>
    <property type="molecule type" value="Genomic_DNA"/>
</dbReference>
<dbReference type="RefSeq" id="WP_012343899.1">
    <property type="nucleotide sequence ID" value="NC_010520.1"/>
</dbReference>
<dbReference type="SMR" id="B1L1E4"/>
<dbReference type="KEGG" id="cbl:CLK_2636"/>
<dbReference type="HOGENOM" id="CLU_060704_1_1_9"/>
<dbReference type="UniPathway" id="UPA00070">
    <property type="reaction ID" value="UER00120"/>
</dbReference>
<dbReference type="GO" id="GO:0004590">
    <property type="term" value="F:orotidine-5'-phosphate decarboxylase activity"/>
    <property type="evidence" value="ECO:0007669"/>
    <property type="project" value="UniProtKB-UniRule"/>
</dbReference>
<dbReference type="GO" id="GO:0006207">
    <property type="term" value="P:'de novo' pyrimidine nucleobase biosynthetic process"/>
    <property type="evidence" value="ECO:0007669"/>
    <property type="project" value="InterPro"/>
</dbReference>
<dbReference type="GO" id="GO:0044205">
    <property type="term" value="P:'de novo' UMP biosynthetic process"/>
    <property type="evidence" value="ECO:0007669"/>
    <property type="project" value="UniProtKB-UniRule"/>
</dbReference>
<dbReference type="CDD" id="cd04725">
    <property type="entry name" value="OMP_decarboxylase_like"/>
    <property type="match status" value="1"/>
</dbReference>
<dbReference type="FunFam" id="3.20.20.70:FF:000246">
    <property type="entry name" value="Orotidine 5'-phosphate decarboxylase"/>
    <property type="match status" value="1"/>
</dbReference>
<dbReference type="Gene3D" id="3.20.20.70">
    <property type="entry name" value="Aldolase class I"/>
    <property type="match status" value="1"/>
</dbReference>
<dbReference type="HAMAP" id="MF_01215">
    <property type="entry name" value="OMPdecase_type2"/>
    <property type="match status" value="1"/>
</dbReference>
<dbReference type="InterPro" id="IPR013785">
    <property type="entry name" value="Aldolase_TIM"/>
</dbReference>
<dbReference type="InterPro" id="IPR011995">
    <property type="entry name" value="OMPdecase_type-2"/>
</dbReference>
<dbReference type="InterPro" id="IPR001754">
    <property type="entry name" value="OMPdeCOase_dom"/>
</dbReference>
<dbReference type="InterPro" id="IPR011060">
    <property type="entry name" value="RibuloseP-bd_barrel"/>
</dbReference>
<dbReference type="NCBIfam" id="TIGR02127">
    <property type="entry name" value="pyrF_sub2"/>
    <property type="match status" value="1"/>
</dbReference>
<dbReference type="PANTHER" id="PTHR43375">
    <property type="entry name" value="OROTIDINE 5'-PHOSPHATE DECARBOXYLASE"/>
    <property type="match status" value="1"/>
</dbReference>
<dbReference type="PANTHER" id="PTHR43375:SF1">
    <property type="entry name" value="OROTIDINE 5'-PHOSPHATE DECARBOXYLASE"/>
    <property type="match status" value="1"/>
</dbReference>
<dbReference type="Pfam" id="PF00215">
    <property type="entry name" value="OMPdecase"/>
    <property type="match status" value="1"/>
</dbReference>
<dbReference type="SMART" id="SM00934">
    <property type="entry name" value="OMPdecase"/>
    <property type="match status" value="1"/>
</dbReference>
<dbReference type="SUPFAM" id="SSF51366">
    <property type="entry name" value="Ribulose-phoshate binding barrel"/>
    <property type="match status" value="1"/>
</dbReference>
<organism>
    <name type="scientific">Clostridium botulinum (strain Loch Maree / Type A3)</name>
    <dbReference type="NCBI Taxonomy" id="498214"/>
    <lineage>
        <taxon>Bacteria</taxon>
        <taxon>Bacillati</taxon>
        <taxon>Bacillota</taxon>
        <taxon>Clostridia</taxon>
        <taxon>Eubacteriales</taxon>
        <taxon>Clostridiaceae</taxon>
        <taxon>Clostridium</taxon>
    </lineage>
</organism>
<feature type="chain" id="PRO_1000164747" description="Orotidine 5'-phosphate decarboxylase">
    <location>
        <begin position="1"/>
        <end position="283"/>
    </location>
</feature>
<feature type="active site" description="Proton donor" evidence="1">
    <location>
        <position position="97"/>
    </location>
</feature>
<accession>B1L1E4</accession>
<sequence length="283" mass="31886">MIIDRLYENVEKKGCVCVGLDTDISYLPKGFLNKFTNIEDAIFAFNQRIVDSTFDVSACYKVQIAYYEAMGIKGMILYNKTLEYIRKKGGIVIADIKRGDISATAKMYAKAHFEGDFESDFITLNPYMGMDTLEPYKDYFKNKEKGVFLLLRTSNEGSKDIQYLDLKDNKKVYNKVGEKIENIGKEFLGNCGYSSIGAVVGCTAEENNIRKELKHTFFLIPGYGAQGGKAEVAKSYLSEGNGGIINSSRGILLAYKKYDEEGKNFEECARNEVINMKKTLQII</sequence>
<evidence type="ECO:0000255" key="1">
    <source>
        <dbReference type="HAMAP-Rule" id="MF_01215"/>
    </source>
</evidence>
<gene>
    <name evidence="1" type="primary">pyrF</name>
    <name type="ordered locus">CLK_2636</name>
</gene>
<protein>
    <recommendedName>
        <fullName evidence="1">Orotidine 5'-phosphate decarboxylase</fullName>
        <ecNumber evidence="1">4.1.1.23</ecNumber>
    </recommendedName>
    <alternativeName>
        <fullName evidence="1">OMP decarboxylase</fullName>
        <shortName evidence="1">OMPDCase</shortName>
        <shortName evidence="1">OMPdecase</shortName>
    </alternativeName>
</protein>
<reference key="1">
    <citation type="journal article" date="2007" name="PLoS ONE">
        <title>Analysis of the neurotoxin complex genes in Clostridium botulinum A1-A4 and B1 strains: BoNT/A3, /Ba4 and /B1 clusters are located within plasmids.</title>
        <authorList>
            <person name="Smith T.J."/>
            <person name="Hill K.K."/>
            <person name="Foley B.T."/>
            <person name="Detter J.C."/>
            <person name="Munk A.C."/>
            <person name="Bruce D.C."/>
            <person name="Doggett N.A."/>
            <person name="Smith L.A."/>
            <person name="Marks J.D."/>
            <person name="Xie G."/>
            <person name="Brettin T.S."/>
        </authorList>
    </citation>
    <scope>NUCLEOTIDE SEQUENCE [LARGE SCALE GENOMIC DNA]</scope>
    <source>
        <strain>Loch Maree / Type A3</strain>
    </source>
</reference>
<comment type="catalytic activity">
    <reaction evidence="1">
        <text>orotidine 5'-phosphate + H(+) = UMP + CO2</text>
        <dbReference type="Rhea" id="RHEA:11596"/>
        <dbReference type="ChEBI" id="CHEBI:15378"/>
        <dbReference type="ChEBI" id="CHEBI:16526"/>
        <dbReference type="ChEBI" id="CHEBI:57538"/>
        <dbReference type="ChEBI" id="CHEBI:57865"/>
        <dbReference type="EC" id="4.1.1.23"/>
    </reaction>
</comment>
<comment type="pathway">
    <text evidence="1">Pyrimidine metabolism; UMP biosynthesis via de novo pathway; UMP from orotate: step 2/2.</text>
</comment>
<comment type="similarity">
    <text evidence="1">Belongs to the OMP decarboxylase family. Type 2 subfamily.</text>
</comment>